<reference key="1">
    <citation type="submission" date="2006-12" db="EMBL/GenBank/DDBJ databases">
        <title>Complete sequence of Acidovorax avenae subsp. citrulli AAC00-1.</title>
        <authorList>
            <person name="Copeland A."/>
            <person name="Lucas S."/>
            <person name="Lapidus A."/>
            <person name="Barry K."/>
            <person name="Detter J.C."/>
            <person name="Glavina del Rio T."/>
            <person name="Dalin E."/>
            <person name="Tice H."/>
            <person name="Pitluck S."/>
            <person name="Kiss H."/>
            <person name="Brettin T."/>
            <person name="Bruce D."/>
            <person name="Han C."/>
            <person name="Tapia R."/>
            <person name="Gilna P."/>
            <person name="Schmutz J."/>
            <person name="Larimer F."/>
            <person name="Land M."/>
            <person name="Hauser L."/>
            <person name="Kyrpides N."/>
            <person name="Kim E."/>
            <person name="Stahl D."/>
            <person name="Richardson P."/>
        </authorList>
    </citation>
    <scope>NUCLEOTIDE SEQUENCE [LARGE SCALE GENOMIC DNA]</scope>
    <source>
        <strain>AAC00-1</strain>
    </source>
</reference>
<feature type="chain" id="PRO_0000288112" description="tRNA (guanine-N(7)-)-methyltransferase">
    <location>
        <begin position="1"/>
        <end position="249"/>
    </location>
</feature>
<feature type="region of interest" description="Disordered" evidence="3">
    <location>
        <begin position="1"/>
        <end position="24"/>
    </location>
</feature>
<feature type="region of interest" description="Interaction with RNA" evidence="2">
    <location>
        <begin position="162"/>
        <end position="167"/>
    </location>
</feature>
<feature type="active site" evidence="1">
    <location>
        <position position="156"/>
    </location>
</feature>
<feature type="binding site" evidence="2">
    <location>
        <position position="81"/>
    </location>
    <ligand>
        <name>S-adenosyl-L-methionine</name>
        <dbReference type="ChEBI" id="CHEBI:59789"/>
    </ligand>
</feature>
<feature type="binding site" evidence="2">
    <location>
        <position position="106"/>
    </location>
    <ligand>
        <name>S-adenosyl-L-methionine</name>
        <dbReference type="ChEBI" id="CHEBI:59789"/>
    </ligand>
</feature>
<feature type="binding site" evidence="2">
    <location>
        <position position="133"/>
    </location>
    <ligand>
        <name>S-adenosyl-L-methionine</name>
        <dbReference type="ChEBI" id="CHEBI:59789"/>
    </ligand>
</feature>
<feature type="binding site" evidence="2">
    <location>
        <position position="156"/>
    </location>
    <ligand>
        <name>S-adenosyl-L-methionine</name>
        <dbReference type="ChEBI" id="CHEBI:59789"/>
    </ligand>
</feature>
<feature type="binding site" evidence="2">
    <location>
        <position position="160"/>
    </location>
    <ligand>
        <name>substrate</name>
    </ligand>
</feature>
<feature type="binding site" evidence="2">
    <location>
        <position position="192"/>
    </location>
    <ligand>
        <name>substrate</name>
    </ligand>
</feature>
<feature type="binding site" evidence="2">
    <location>
        <begin position="227"/>
        <end position="230"/>
    </location>
    <ligand>
        <name>substrate</name>
    </ligand>
</feature>
<organism>
    <name type="scientific">Paracidovorax citrulli (strain AAC00-1)</name>
    <name type="common">Acidovorax citrulli</name>
    <dbReference type="NCBI Taxonomy" id="397945"/>
    <lineage>
        <taxon>Bacteria</taxon>
        <taxon>Pseudomonadati</taxon>
        <taxon>Pseudomonadota</taxon>
        <taxon>Betaproteobacteria</taxon>
        <taxon>Burkholderiales</taxon>
        <taxon>Comamonadaceae</taxon>
        <taxon>Paracidovorax</taxon>
    </lineage>
</organism>
<evidence type="ECO:0000250" key="1"/>
<evidence type="ECO:0000255" key="2">
    <source>
        <dbReference type="HAMAP-Rule" id="MF_01057"/>
    </source>
</evidence>
<evidence type="ECO:0000256" key="3">
    <source>
        <dbReference type="SAM" id="MobiDB-lite"/>
    </source>
</evidence>
<accession>A1TRL2</accession>
<sequence length="249" mass="27270">MHSIPADTGHTPSRAPAGNGSPPADVAFPKAIKSYVRRAGRTTTGQAKALETFGSQFVLDYTPGPLDAQAAFGRAAPLILEIGFGMGEATAHIAGVRPQDDFLCCEVHEPGVGALLKRIGERGLTNIRILQHDAVEVIDHMLPEGSLDGVHIFFPDPWHKKRHNKRRLVQPPLVAKLARRLKPGGYLHCATDWQPYAEQMLEVLSAEPLLANSADGYAPQPDYRPLTKFENRGLRLGHGVWDILFRRVA</sequence>
<comment type="function">
    <text evidence="2">Catalyzes the formation of N(7)-methylguanine at position 46 (m7G46) in tRNA.</text>
</comment>
<comment type="catalytic activity">
    <reaction evidence="2">
        <text>guanosine(46) in tRNA + S-adenosyl-L-methionine = N(7)-methylguanosine(46) in tRNA + S-adenosyl-L-homocysteine</text>
        <dbReference type="Rhea" id="RHEA:42708"/>
        <dbReference type="Rhea" id="RHEA-COMP:10188"/>
        <dbReference type="Rhea" id="RHEA-COMP:10189"/>
        <dbReference type="ChEBI" id="CHEBI:57856"/>
        <dbReference type="ChEBI" id="CHEBI:59789"/>
        <dbReference type="ChEBI" id="CHEBI:74269"/>
        <dbReference type="ChEBI" id="CHEBI:74480"/>
        <dbReference type="EC" id="2.1.1.33"/>
    </reaction>
</comment>
<comment type="pathway">
    <text evidence="2">tRNA modification; N(7)-methylguanine-tRNA biosynthesis.</text>
</comment>
<comment type="similarity">
    <text evidence="2">Belongs to the class I-like SAM-binding methyltransferase superfamily. TrmB family.</text>
</comment>
<name>TRMB_PARC0</name>
<dbReference type="EC" id="2.1.1.33" evidence="2"/>
<dbReference type="EMBL" id="CP000512">
    <property type="protein sequence ID" value="ABM33600.1"/>
    <property type="molecule type" value="Genomic_DNA"/>
</dbReference>
<dbReference type="RefSeq" id="WP_011796110.1">
    <property type="nucleotide sequence ID" value="NC_008752.1"/>
</dbReference>
<dbReference type="SMR" id="A1TRL2"/>
<dbReference type="STRING" id="397945.Aave_3033"/>
<dbReference type="GeneID" id="79792717"/>
<dbReference type="KEGG" id="aav:Aave_3033"/>
<dbReference type="eggNOG" id="COG0220">
    <property type="taxonomic scope" value="Bacteria"/>
</dbReference>
<dbReference type="HOGENOM" id="CLU_050910_0_1_4"/>
<dbReference type="UniPathway" id="UPA00989"/>
<dbReference type="Proteomes" id="UP000002596">
    <property type="component" value="Chromosome"/>
</dbReference>
<dbReference type="GO" id="GO:0043527">
    <property type="term" value="C:tRNA methyltransferase complex"/>
    <property type="evidence" value="ECO:0007669"/>
    <property type="project" value="TreeGrafter"/>
</dbReference>
<dbReference type="GO" id="GO:0008176">
    <property type="term" value="F:tRNA (guanine(46)-N7)-methyltransferase activity"/>
    <property type="evidence" value="ECO:0007669"/>
    <property type="project" value="UniProtKB-UniRule"/>
</dbReference>
<dbReference type="CDD" id="cd02440">
    <property type="entry name" value="AdoMet_MTases"/>
    <property type="match status" value="1"/>
</dbReference>
<dbReference type="FunFam" id="3.40.50.150:FF:000035">
    <property type="entry name" value="tRNA (guanine-N(7)-)-methyltransferase"/>
    <property type="match status" value="1"/>
</dbReference>
<dbReference type="Gene3D" id="3.40.50.150">
    <property type="entry name" value="Vaccinia Virus protein VP39"/>
    <property type="match status" value="1"/>
</dbReference>
<dbReference type="HAMAP" id="MF_01057">
    <property type="entry name" value="tRNA_methyltr_TrmB"/>
    <property type="match status" value="1"/>
</dbReference>
<dbReference type="InterPro" id="IPR029063">
    <property type="entry name" value="SAM-dependent_MTases_sf"/>
</dbReference>
<dbReference type="InterPro" id="IPR003358">
    <property type="entry name" value="tRNA_(Gua-N-7)_MeTrfase_Trmb"/>
</dbReference>
<dbReference type="InterPro" id="IPR055361">
    <property type="entry name" value="tRNA_methyltr_TrmB_bact"/>
</dbReference>
<dbReference type="NCBIfam" id="TIGR00091">
    <property type="entry name" value="tRNA (guanosine(46)-N7)-methyltransferase TrmB"/>
    <property type="match status" value="1"/>
</dbReference>
<dbReference type="PANTHER" id="PTHR23417">
    <property type="entry name" value="3-DEOXY-D-MANNO-OCTULOSONIC-ACID TRANSFERASE/TRNA GUANINE-N 7 - -METHYLTRANSFERASE"/>
    <property type="match status" value="1"/>
</dbReference>
<dbReference type="PANTHER" id="PTHR23417:SF14">
    <property type="entry name" value="PENTACOTRIPEPTIDE-REPEAT REGION OF PRORP DOMAIN-CONTAINING PROTEIN"/>
    <property type="match status" value="1"/>
</dbReference>
<dbReference type="Pfam" id="PF02390">
    <property type="entry name" value="Methyltransf_4"/>
    <property type="match status" value="1"/>
</dbReference>
<dbReference type="SUPFAM" id="SSF53335">
    <property type="entry name" value="S-adenosyl-L-methionine-dependent methyltransferases"/>
    <property type="match status" value="1"/>
</dbReference>
<dbReference type="PROSITE" id="PS51625">
    <property type="entry name" value="SAM_MT_TRMB"/>
    <property type="match status" value="1"/>
</dbReference>
<keyword id="KW-0489">Methyltransferase</keyword>
<keyword id="KW-0949">S-adenosyl-L-methionine</keyword>
<keyword id="KW-0808">Transferase</keyword>
<keyword id="KW-0819">tRNA processing</keyword>
<proteinExistence type="inferred from homology"/>
<gene>
    <name evidence="2" type="primary">trmB</name>
    <name type="ordered locus">Aave_3033</name>
</gene>
<protein>
    <recommendedName>
        <fullName evidence="2">tRNA (guanine-N(7)-)-methyltransferase</fullName>
        <ecNumber evidence="2">2.1.1.33</ecNumber>
    </recommendedName>
    <alternativeName>
        <fullName evidence="2">tRNA (guanine(46)-N(7))-methyltransferase</fullName>
    </alternativeName>
    <alternativeName>
        <fullName evidence="2">tRNA(m7G46)-methyltransferase</fullName>
    </alternativeName>
</protein>